<gene>
    <name type="ORF">GK25285</name>
</gene>
<dbReference type="EC" id="5.1.99.6"/>
<dbReference type="EMBL" id="CH964239">
    <property type="protein sequence ID" value="EDW82145.1"/>
    <property type="status" value="ALT_INIT"/>
    <property type="molecule type" value="Genomic_DNA"/>
</dbReference>
<dbReference type="SMR" id="B4NEH6"/>
<dbReference type="STRING" id="7260.B4NEH6"/>
<dbReference type="EnsemblMetazoa" id="FBtr0420337">
    <property type="protein sequence ID" value="FBpp0378457"/>
    <property type="gene ID" value="FBgn0227244"/>
</dbReference>
<dbReference type="EnsemblMetazoa" id="XM_002071123.4">
    <property type="protein sequence ID" value="XP_002071159.2"/>
    <property type="gene ID" value="LOC6648576"/>
</dbReference>
<dbReference type="GeneID" id="6648576"/>
<dbReference type="KEGG" id="dwi:6648576"/>
<dbReference type="eggNOG" id="KOG2585">
    <property type="taxonomic scope" value="Eukaryota"/>
</dbReference>
<dbReference type="OrthoDB" id="10064708at2759"/>
<dbReference type="Proteomes" id="UP000007798">
    <property type="component" value="Unassembled WGS sequence"/>
</dbReference>
<dbReference type="GO" id="GO:0005739">
    <property type="term" value="C:mitochondrion"/>
    <property type="evidence" value="ECO:0007669"/>
    <property type="project" value="TreeGrafter"/>
</dbReference>
<dbReference type="GO" id="GO:0046872">
    <property type="term" value="F:metal ion binding"/>
    <property type="evidence" value="ECO:0007669"/>
    <property type="project" value="UniProtKB-KW"/>
</dbReference>
<dbReference type="GO" id="GO:0052856">
    <property type="term" value="F:NAD(P)HX epimerase activity"/>
    <property type="evidence" value="ECO:0007669"/>
    <property type="project" value="UniProtKB-UniRule"/>
</dbReference>
<dbReference type="GO" id="GO:0000166">
    <property type="term" value="F:nucleotide binding"/>
    <property type="evidence" value="ECO:0007669"/>
    <property type="project" value="UniProtKB-KW"/>
</dbReference>
<dbReference type="FunFam" id="3.40.50.10260:FF:000013">
    <property type="entry name" value="NAD(P)H-hydrate epimerase"/>
    <property type="match status" value="1"/>
</dbReference>
<dbReference type="Gene3D" id="3.40.50.10260">
    <property type="entry name" value="YjeF N-terminal domain"/>
    <property type="match status" value="1"/>
</dbReference>
<dbReference type="HAMAP" id="MF_01966">
    <property type="entry name" value="NADHX_epimerase"/>
    <property type="match status" value="1"/>
</dbReference>
<dbReference type="InterPro" id="IPR004443">
    <property type="entry name" value="YjeF_N_dom"/>
</dbReference>
<dbReference type="InterPro" id="IPR036652">
    <property type="entry name" value="YjeF_N_dom_sf"/>
</dbReference>
<dbReference type="InterPro" id="IPR032976">
    <property type="entry name" value="YJEFN_prot_NAXE-like"/>
</dbReference>
<dbReference type="NCBIfam" id="TIGR00197">
    <property type="entry name" value="yjeF_nterm"/>
    <property type="match status" value="1"/>
</dbReference>
<dbReference type="PANTHER" id="PTHR13232">
    <property type="entry name" value="NAD(P)H-HYDRATE EPIMERASE"/>
    <property type="match status" value="1"/>
</dbReference>
<dbReference type="PANTHER" id="PTHR13232:SF10">
    <property type="entry name" value="NAD(P)H-HYDRATE EPIMERASE"/>
    <property type="match status" value="1"/>
</dbReference>
<dbReference type="Pfam" id="PF03853">
    <property type="entry name" value="YjeF_N"/>
    <property type="match status" value="1"/>
</dbReference>
<dbReference type="SUPFAM" id="SSF64153">
    <property type="entry name" value="YjeF N-terminal domain-like"/>
    <property type="match status" value="1"/>
</dbReference>
<dbReference type="PROSITE" id="PS51385">
    <property type="entry name" value="YJEF_N"/>
    <property type="match status" value="1"/>
</dbReference>
<protein>
    <recommendedName>
        <fullName evidence="1">NAD(P)H-hydrate epimerase</fullName>
        <ecNumber>5.1.99.6</ecNumber>
    </recommendedName>
    <alternativeName>
        <fullName evidence="1">NAD(P)HX epimerase</fullName>
    </alternativeName>
</protein>
<keyword id="KW-0413">Isomerase</keyword>
<keyword id="KW-0479">Metal-binding</keyword>
<keyword id="KW-0520">NAD</keyword>
<keyword id="KW-0521">NADP</keyword>
<keyword id="KW-0547">Nucleotide-binding</keyword>
<keyword id="KW-0630">Potassium</keyword>
<keyword id="KW-1185">Reference proteome</keyword>
<reference evidence="3" key="1">
    <citation type="journal article" date="2007" name="Nature">
        <title>Evolution of genes and genomes on the Drosophila phylogeny.</title>
        <authorList>
            <consortium name="Drosophila 12 genomes consortium"/>
        </authorList>
    </citation>
    <scope>NUCLEOTIDE SEQUENCE [LARGE SCALE GENOMIC DNA]</scope>
    <source>
        <strain evidence="3">Tucson 14030-0811.24</strain>
    </source>
</reference>
<evidence type="ECO:0000255" key="1">
    <source>
        <dbReference type="HAMAP-Rule" id="MF_03159"/>
    </source>
</evidence>
<evidence type="ECO:0000305" key="2"/>
<evidence type="ECO:0000312" key="3">
    <source>
        <dbReference type="EMBL" id="EDW82145.1"/>
    </source>
</evidence>
<feature type="chain" id="PRO_0000379433" description="NAD(P)H-hydrate epimerase">
    <location>
        <begin position="1"/>
        <end position="238"/>
    </location>
</feature>
<feature type="domain" description="YjeF N-terminal" evidence="1">
    <location>
        <begin position="10"/>
        <end position="225"/>
    </location>
</feature>
<feature type="binding site" evidence="1">
    <location>
        <begin position="68"/>
        <end position="72"/>
    </location>
    <ligand>
        <name>(6S)-NADPHX</name>
        <dbReference type="ChEBI" id="CHEBI:64076"/>
    </ligand>
</feature>
<feature type="binding site" evidence="1">
    <location>
        <position position="69"/>
    </location>
    <ligand>
        <name>K(+)</name>
        <dbReference type="ChEBI" id="CHEBI:29103"/>
    </ligand>
</feature>
<feature type="binding site" evidence="1">
    <location>
        <position position="133"/>
    </location>
    <ligand>
        <name>K(+)</name>
        <dbReference type="ChEBI" id="CHEBI:29103"/>
    </ligand>
</feature>
<feature type="binding site" evidence="1">
    <location>
        <begin position="137"/>
        <end position="143"/>
    </location>
    <ligand>
        <name>(6S)-NADPHX</name>
        <dbReference type="ChEBI" id="CHEBI:64076"/>
    </ligand>
</feature>
<feature type="binding site" evidence="1">
    <location>
        <position position="166"/>
    </location>
    <ligand>
        <name>(6S)-NADPHX</name>
        <dbReference type="ChEBI" id="CHEBI:64076"/>
    </ligand>
</feature>
<feature type="binding site" evidence="1">
    <location>
        <position position="169"/>
    </location>
    <ligand>
        <name>K(+)</name>
        <dbReference type="ChEBI" id="CHEBI:29103"/>
    </ligand>
</feature>
<sequence>MLKYLNQAEAIKVDQILFNEYKFSVDQLMELAGLSCAHAVAKCFPSPCQGNDDKAGKLRVLVCCGPGNNGGDGLVCARHLALMGYEPTIYYPKPTAKPLYENLHHQCELMEISTISQCPSVEEAAHSYHLIVDALFGFSFKPPVRSDFLSVMELMQQTKIPIASIDIPSGWDVEKGKLNDCELEPKLLISLTAPKLCAKHFKGQYHYLGGRFVPPALQRQYELNLPNYPGTELCVKLS</sequence>
<accession>B4NEH6</accession>
<comment type="function">
    <text evidence="1">Catalyzes the epimerization of the S- and R-forms of NAD(P)HX, a damaged form of NAD(P)H that is a result of enzymatic or heat-dependent hydration. This is a prerequisite for the S-specific NAD(P)H-hydrate dehydratase to allow the repair of both epimers of NAD(P)HX.</text>
</comment>
<comment type="catalytic activity">
    <reaction>
        <text>(6R)-NADHX = (6S)-NADHX</text>
        <dbReference type="Rhea" id="RHEA:32215"/>
        <dbReference type="ChEBI" id="CHEBI:64074"/>
        <dbReference type="ChEBI" id="CHEBI:64075"/>
        <dbReference type="EC" id="5.1.99.6"/>
    </reaction>
</comment>
<comment type="catalytic activity">
    <reaction>
        <text>(6R)-NADPHX = (6S)-NADPHX</text>
        <dbReference type="Rhea" id="RHEA:32227"/>
        <dbReference type="ChEBI" id="CHEBI:64076"/>
        <dbReference type="ChEBI" id="CHEBI:64077"/>
        <dbReference type="EC" id="5.1.99.6"/>
    </reaction>
</comment>
<comment type="cofactor">
    <cofactor evidence="1">
        <name>K(+)</name>
        <dbReference type="ChEBI" id="CHEBI:29103"/>
    </cofactor>
    <text evidence="1">Binds 1 potassium ion per subunit.</text>
</comment>
<comment type="similarity">
    <text evidence="1">Belongs to the NnrE/AIBP family.</text>
</comment>
<comment type="sequence caution" evidence="2">
    <conflict type="erroneous initiation">
        <sequence resource="EMBL-CDS" id="EDW82145"/>
    </conflict>
</comment>
<organism>
    <name type="scientific">Drosophila willistoni</name>
    <name type="common">Fruit fly</name>
    <dbReference type="NCBI Taxonomy" id="7260"/>
    <lineage>
        <taxon>Eukaryota</taxon>
        <taxon>Metazoa</taxon>
        <taxon>Ecdysozoa</taxon>
        <taxon>Arthropoda</taxon>
        <taxon>Hexapoda</taxon>
        <taxon>Insecta</taxon>
        <taxon>Pterygota</taxon>
        <taxon>Neoptera</taxon>
        <taxon>Endopterygota</taxon>
        <taxon>Diptera</taxon>
        <taxon>Brachycera</taxon>
        <taxon>Muscomorpha</taxon>
        <taxon>Ephydroidea</taxon>
        <taxon>Drosophilidae</taxon>
        <taxon>Drosophila</taxon>
        <taxon>Sophophora</taxon>
    </lineage>
</organism>
<proteinExistence type="inferred from homology"/>
<name>NNRE_DROWI</name>